<reference key="1">
    <citation type="journal article" date="1987" name="Biochemistry">
        <title>Ovomucoid third domains from 100 avian species: isolation, sequences, and hypervariability of enzyme-inhibitor contact residues.</title>
        <authorList>
            <person name="Laskowski M. Jr."/>
            <person name="Kato I."/>
            <person name="Ardelt W."/>
            <person name="Cook J."/>
            <person name="Denton A."/>
            <person name="Empie M.W."/>
            <person name="Kohr W.J."/>
            <person name="Park S.J."/>
            <person name="Parks K."/>
            <person name="Schatzley B.L."/>
            <person name="Schoenberger O.L."/>
            <person name="Tashiro M."/>
            <person name="Vichot G."/>
            <person name="Whatley H.E."/>
            <person name="Wieczorek A."/>
            <person name="Wieczorek M."/>
        </authorList>
    </citation>
    <scope>PROTEIN SEQUENCE</scope>
</reference>
<name>IOVO_CHLPI</name>
<proteinExistence type="evidence at protein level"/>
<keyword id="KW-0903">Direct protein sequencing</keyword>
<keyword id="KW-1015">Disulfide bond</keyword>
<keyword id="KW-0325">Glycoprotein</keyword>
<keyword id="KW-0646">Protease inhibitor</keyword>
<keyword id="KW-0677">Repeat</keyword>
<keyword id="KW-0964">Secreted</keyword>
<keyword id="KW-0722">Serine protease inhibitor</keyword>
<accession>P68151</accession>
<accession>P05576</accession>
<dbReference type="PIR" id="E31446">
    <property type="entry name" value="E31446"/>
</dbReference>
<dbReference type="SMR" id="P68151"/>
<dbReference type="GO" id="GO:0005576">
    <property type="term" value="C:extracellular region"/>
    <property type="evidence" value="ECO:0007669"/>
    <property type="project" value="UniProtKB-SubCell"/>
</dbReference>
<dbReference type="GO" id="GO:0004867">
    <property type="term" value="F:serine-type endopeptidase inhibitor activity"/>
    <property type="evidence" value="ECO:0007669"/>
    <property type="project" value="UniProtKB-KW"/>
</dbReference>
<dbReference type="CDD" id="cd00104">
    <property type="entry name" value="KAZAL_FS"/>
    <property type="match status" value="1"/>
</dbReference>
<dbReference type="FunFam" id="3.30.60.30:FF:000037">
    <property type="entry name" value="Ovomucoid"/>
    <property type="match status" value="1"/>
</dbReference>
<dbReference type="Gene3D" id="3.30.60.30">
    <property type="match status" value="1"/>
</dbReference>
<dbReference type="InterPro" id="IPR051597">
    <property type="entry name" value="Bifunctional_prot_inhibitor"/>
</dbReference>
<dbReference type="InterPro" id="IPR002350">
    <property type="entry name" value="Kazal_dom"/>
</dbReference>
<dbReference type="InterPro" id="IPR036058">
    <property type="entry name" value="Kazal_dom_sf"/>
</dbReference>
<dbReference type="InterPro" id="IPR001239">
    <property type="entry name" value="Prot_inh_Kazal-m"/>
</dbReference>
<dbReference type="PANTHER" id="PTHR47729:SF1">
    <property type="entry name" value="OVOMUCOID-LIKE-RELATED"/>
    <property type="match status" value="1"/>
</dbReference>
<dbReference type="PANTHER" id="PTHR47729">
    <property type="entry name" value="SERINE PEPTIDASE INHIBITOR, KAZAL TYPE 2, TANDEM DUPLICATE 1-RELATED"/>
    <property type="match status" value="1"/>
</dbReference>
<dbReference type="Pfam" id="PF00050">
    <property type="entry name" value="Kazal_1"/>
    <property type="match status" value="1"/>
</dbReference>
<dbReference type="PRINTS" id="PR00290">
    <property type="entry name" value="KAZALINHBTR"/>
</dbReference>
<dbReference type="SMART" id="SM00280">
    <property type="entry name" value="KAZAL"/>
    <property type="match status" value="1"/>
</dbReference>
<dbReference type="SUPFAM" id="SSF100895">
    <property type="entry name" value="Kazal-type serine protease inhibitors"/>
    <property type="match status" value="1"/>
</dbReference>
<dbReference type="PROSITE" id="PS00282">
    <property type="entry name" value="KAZAL_1"/>
    <property type="match status" value="1"/>
</dbReference>
<dbReference type="PROSITE" id="PS51465">
    <property type="entry name" value="KAZAL_2"/>
    <property type="match status" value="1"/>
</dbReference>
<organism>
    <name type="scientific">Chloephaga picta</name>
    <name type="common">Upland goose</name>
    <name type="synonym">Anas picta</name>
    <dbReference type="NCBI Taxonomy" id="8861"/>
    <lineage>
        <taxon>Eukaryota</taxon>
        <taxon>Metazoa</taxon>
        <taxon>Chordata</taxon>
        <taxon>Craniata</taxon>
        <taxon>Vertebrata</taxon>
        <taxon>Euteleostomi</taxon>
        <taxon>Archelosauria</taxon>
        <taxon>Archosauria</taxon>
        <taxon>Dinosauria</taxon>
        <taxon>Saurischia</taxon>
        <taxon>Theropoda</taxon>
        <taxon>Coelurosauria</taxon>
        <taxon>Aves</taxon>
        <taxon>Neognathae</taxon>
        <taxon>Galloanserae</taxon>
        <taxon>Anseriformes</taxon>
        <taxon>Anatidae</taxon>
        <taxon>Tadorninae</taxon>
        <taxon>Chloephaga</taxon>
    </lineage>
</organism>
<feature type="chain" id="PRO_0000073082" description="Ovomucoid">
    <location>
        <begin position="1" status="less than"/>
        <end position="54" status="greater than"/>
    </location>
</feature>
<feature type="domain" description="Kazal-like" evidence="1">
    <location>
        <begin position="4"/>
        <end position="54"/>
    </location>
</feature>
<feature type="site" description="Reactive bond 3">
    <location>
        <begin position="16"/>
        <end position="17"/>
    </location>
</feature>
<feature type="glycosylation site" description="N-linked (GlcNAc...) asparagine">
    <location>
        <position position="43"/>
    </location>
</feature>
<feature type="disulfide bond">
    <location>
        <begin position="6"/>
        <end position="36"/>
    </location>
</feature>
<feature type="disulfide bond">
    <location>
        <begin position="14"/>
        <end position="33"/>
    </location>
</feature>
<feature type="disulfide bond">
    <location>
        <begin position="22"/>
        <end position="54"/>
    </location>
</feature>
<feature type="non-terminal residue">
    <location>
        <position position="1"/>
    </location>
</feature>
<feature type="non-terminal residue">
    <location>
        <position position="54"/>
    </location>
</feature>
<evidence type="ECO:0000255" key="1">
    <source>
        <dbReference type="PROSITE-ProRule" id="PRU00798"/>
    </source>
</evidence>
<comment type="subcellular location">
    <subcellularLocation>
        <location>Secreted</location>
    </subcellularLocation>
</comment>
<comment type="domain">
    <text>Avian ovomucoid consists of three homologous, tandem Kazal family inhibitory domains.</text>
</comment>
<sequence>VATVDCSGYPKPACTMEYMPLCGSDNKTYGNKCNFCNAVVDSNGTLTLSHFGEC</sequence>
<protein>
    <recommendedName>
        <fullName>Ovomucoid</fullName>
    </recommendedName>
</protein>